<reference key="1">
    <citation type="journal article" date="2008" name="Environ. Microbiol.">
        <title>The genome of Erwinia tasmaniensis strain Et1/99, a non-pathogenic bacterium in the genus Erwinia.</title>
        <authorList>
            <person name="Kube M."/>
            <person name="Migdoll A.M."/>
            <person name="Mueller I."/>
            <person name="Kuhl H."/>
            <person name="Beck A."/>
            <person name="Reinhardt R."/>
            <person name="Geider K."/>
        </authorList>
    </citation>
    <scope>NUCLEOTIDE SEQUENCE [LARGE SCALE GENOMIC DNA]</scope>
    <source>
        <strain>DSM 17950 / CFBP 7177 / CIP 109463 / NCPPB 4357 / Et1/99</strain>
    </source>
</reference>
<dbReference type="EC" id="6.2.1.5" evidence="1"/>
<dbReference type="EMBL" id="CU468135">
    <property type="protein sequence ID" value="CAO97348.1"/>
    <property type="molecule type" value="Genomic_DNA"/>
</dbReference>
<dbReference type="RefSeq" id="WP_012442017.1">
    <property type="nucleotide sequence ID" value="NC_010694.1"/>
</dbReference>
<dbReference type="SMR" id="B2VBR6"/>
<dbReference type="STRING" id="465817.ETA_23020"/>
<dbReference type="KEGG" id="eta:ETA_23020"/>
<dbReference type="eggNOG" id="COG0045">
    <property type="taxonomic scope" value="Bacteria"/>
</dbReference>
<dbReference type="HOGENOM" id="CLU_037430_0_2_6"/>
<dbReference type="OrthoDB" id="9802602at2"/>
<dbReference type="UniPathway" id="UPA00223">
    <property type="reaction ID" value="UER00999"/>
</dbReference>
<dbReference type="Proteomes" id="UP000001726">
    <property type="component" value="Chromosome"/>
</dbReference>
<dbReference type="GO" id="GO:0005829">
    <property type="term" value="C:cytosol"/>
    <property type="evidence" value="ECO:0007669"/>
    <property type="project" value="TreeGrafter"/>
</dbReference>
<dbReference type="GO" id="GO:0042709">
    <property type="term" value="C:succinate-CoA ligase complex"/>
    <property type="evidence" value="ECO:0007669"/>
    <property type="project" value="TreeGrafter"/>
</dbReference>
<dbReference type="GO" id="GO:0005524">
    <property type="term" value="F:ATP binding"/>
    <property type="evidence" value="ECO:0007669"/>
    <property type="project" value="UniProtKB-UniRule"/>
</dbReference>
<dbReference type="GO" id="GO:0000287">
    <property type="term" value="F:magnesium ion binding"/>
    <property type="evidence" value="ECO:0007669"/>
    <property type="project" value="UniProtKB-UniRule"/>
</dbReference>
<dbReference type="GO" id="GO:0004775">
    <property type="term" value="F:succinate-CoA ligase (ADP-forming) activity"/>
    <property type="evidence" value="ECO:0007669"/>
    <property type="project" value="UniProtKB-UniRule"/>
</dbReference>
<dbReference type="GO" id="GO:0004776">
    <property type="term" value="F:succinate-CoA ligase (GDP-forming) activity"/>
    <property type="evidence" value="ECO:0007669"/>
    <property type="project" value="RHEA"/>
</dbReference>
<dbReference type="GO" id="GO:0006104">
    <property type="term" value="P:succinyl-CoA metabolic process"/>
    <property type="evidence" value="ECO:0007669"/>
    <property type="project" value="TreeGrafter"/>
</dbReference>
<dbReference type="GO" id="GO:0006099">
    <property type="term" value="P:tricarboxylic acid cycle"/>
    <property type="evidence" value="ECO:0007669"/>
    <property type="project" value="UniProtKB-UniRule"/>
</dbReference>
<dbReference type="FunFam" id="3.30.1490.20:FF:000002">
    <property type="entry name" value="Succinate--CoA ligase [ADP-forming] subunit beta"/>
    <property type="match status" value="1"/>
</dbReference>
<dbReference type="FunFam" id="3.30.470.20:FF:000002">
    <property type="entry name" value="Succinate--CoA ligase [ADP-forming] subunit beta"/>
    <property type="match status" value="1"/>
</dbReference>
<dbReference type="FunFam" id="3.40.50.261:FF:000001">
    <property type="entry name" value="Succinate--CoA ligase [ADP-forming] subunit beta"/>
    <property type="match status" value="1"/>
</dbReference>
<dbReference type="Gene3D" id="3.30.1490.20">
    <property type="entry name" value="ATP-grasp fold, A domain"/>
    <property type="match status" value="1"/>
</dbReference>
<dbReference type="Gene3D" id="3.30.470.20">
    <property type="entry name" value="ATP-grasp fold, B domain"/>
    <property type="match status" value="1"/>
</dbReference>
<dbReference type="Gene3D" id="3.40.50.261">
    <property type="entry name" value="Succinyl-CoA synthetase domains"/>
    <property type="match status" value="1"/>
</dbReference>
<dbReference type="HAMAP" id="MF_00558">
    <property type="entry name" value="Succ_CoA_beta"/>
    <property type="match status" value="1"/>
</dbReference>
<dbReference type="InterPro" id="IPR011761">
    <property type="entry name" value="ATP-grasp"/>
</dbReference>
<dbReference type="InterPro" id="IPR013650">
    <property type="entry name" value="ATP-grasp_succ-CoA_synth-type"/>
</dbReference>
<dbReference type="InterPro" id="IPR013815">
    <property type="entry name" value="ATP_grasp_subdomain_1"/>
</dbReference>
<dbReference type="InterPro" id="IPR017866">
    <property type="entry name" value="Succ-CoA_synthase_bsu_CS"/>
</dbReference>
<dbReference type="InterPro" id="IPR005811">
    <property type="entry name" value="SUCC_ACL_C"/>
</dbReference>
<dbReference type="InterPro" id="IPR005809">
    <property type="entry name" value="Succ_CoA_ligase-like_bsu"/>
</dbReference>
<dbReference type="InterPro" id="IPR016102">
    <property type="entry name" value="Succinyl-CoA_synth-like"/>
</dbReference>
<dbReference type="NCBIfam" id="NF001913">
    <property type="entry name" value="PRK00696.1"/>
    <property type="match status" value="1"/>
</dbReference>
<dbReference type="NCBIfam" id="TIGR01016">
    <property type="entry name" value="sucCoAbeta"/>
    <property type="match status" value="1"/>
</dbReference>
<dbReference type="PANTHER" id="PTHR11815:SF10">
    <property type="entry name" value="SUCCINATE--COA LIGASE [GDP-FORMING] SUBUNIT BETA, MITOCHONDRIAL"/>
    <property type="match status" value="1"/>
</dbReference>
<dbReference type="PANTHER" id="PTHR11815">
    <property type="entry name" value="SUCCINYL-COA SYNTHETASE BETA CHAIN"/>
    <property type="match status" value="1"/>
</dbReference>
<dbReference type="Pfam" id="PF08442">
    <property type="entry name" value="ATP-grasp_2"/>
    <property type="match status" value="1"/>
</dbReference>
<dbReference type="Pfam" id="PF00549">
    <property type="entry name" value="Ligase_CoA"/>
    <property type="match status" value="1"/>
</dbReference>
<dbReference type="PIRSF" id="PIRSF001554">
    <property type="entry name" value="SucCS_beta"/>
    <property type="match status" value="1"/>
</dbReference>
<dbReference type="SUPFAM" id="SSF56059">
    <property type="entry name" value="Glutathione synthetase ATP-binding domain-like"/>
    <property type="match status" value="1"/>
</dbReference>
<dbReference type="SUPFAM" id="SSF52210">
    <property type="entry name" value="Succinyl-CoA synthetase domains"/>
    <property type="match status" value="1"/>
</dbReference>
<dbReference type="PROSITE" id="PS50975">
    <property type="entry name" value="ATP_GRASP"/>
    <property type="match status" value="1"/>
</dbReference>
<dbReference type="PROSITE" id="PS01217">
    <property type="entry name" value="SUCCINYL_COA_LIG_3"/>
    <property type="match status" value="1"/>
</dbReference>
<comment type="function">
    <text evidence="1">Succinyl-CoA synthetase functions in the citric acid cycle (TCA), coupling the hydrolysis of succinyl-CoA to the synthesis of either ATP or GTP and thus represents the only step of substrate-level phosphorylation in the TCA. The beta subunit provides nucleotide specificity of the enzyme and binds the substrate succinate, while the binding sites for coenzyme A and phosphate are found in the alpha subunit.</text>
</comment>
<comment type="catalytic activity">
    <reaction evidence="1">
        <text>succinate + ATP + CoA = succinyl-CoA + ADP + phosphate</text>
        <dbReference type="Rhea" id="RHEA:17661"/>
        <dbReference type="ChEBI" id="CHEBI:30031"/>
        <dbReference type="ChEBI" id="CHEBI:30616"/>
        <dbReference type="ChEBI" id="CHEBI:43474"/>
        <dbReference type="ChEBI" id="CHEBI:57287"/>
        <dbReference type="ChEBI" id="CHEBI:57292"/>
        <dbReference type="ChEBI" id="CHEBI:456216"/>
        <dbReference type="EC" id="6.2.1.5"/>
    </reaction>
    <physiologicalReaction direction="right-to-left" evidence="1">
        <dbReference type="Rhea" id="RHEA:17663"/>
    </physiologicalReaction>
</comment>
<comment type="catalytic activity">
    <reaction evidence="1">
        <text>GTP + succinate + CoA = succinyl-CoA + GDP + phosphate</text>
        <dbReference type="Rhea" id="RHEA:22120"/>
        <dbReference type="ChEBI" id="CHEBI:30031"/>
        <dbReference type="ChEBI" id="CHEBI:37565"/>
        <dbReference type="ChEBI" id="CHEBI:43474"/>
        <dbReference type="ChEBI" id="CHEBI:57287"/>
        <dbReference type="ChEBI" id="CHEBI:57292"/>
        <dbReference type="ChEBI" id="CHEBI:58189"/>
    </reaction>
    <physiologicalReaction direction="right-to-left" evidence="1">
        <dbReference type="Rhea" id="RHEA:22122"/>
    </physiologicalReaction>
</comment>
<comment type="cofactor">
    <cofactor evidence="1">
        <name>Mg(2+)</name>
        <dbReference type="ChEBI" id="CHEBI:18420"/>
    </cofactor>
    <text evidence="1">Binds 1 Mg(2+) ion per subunit.</text>
</comment>
<comment type="pathway">
    <text evidence="1">Carbohydrate metabolism; tricarboxylic acid cycle; succinate from succinyl-CoA (ligase route): step 1/1.</text>
</comment>
<comment type="subunit">
    <text evidence="1">Heterotetramer of two alpha and two beta subunits.</text>
</comment>
<comment type="similarity">
    <text evidence="1">Belongs to the succinate/malate CoA ligase beta subunit family.</text>
</comment>
<name>SUCC_ERWT9</name>
<proteinExistence type="inferred from homology"/>
<accession>B2VBR6</accession>
<organism>
    <name type="scientific">Erwinia tasmaniensis (strain DSM 17950 / CFBP 7177 / CIP 109463 / NCPPB 4357 / Et1/99)</name>
    <dbReference type="NCBI Taxonomy" id="465817"/>
    <lineage>
        <taxon>Bacteria</taxon>
        <taxon>Pseudomonadati</taxon>
        <taxon>Pseudomonadota</taxon>
        <taxon>Gammaproteobacteria</taxon>
        <taxon>Enterobacterales</taxon>
        <taxon>Erwiniaceae</taxon>
        <taxon>Erwinia</taxon>
    </lineage>
</organism>
<gene>
    <name evidence="1" type="primary">sucC</name>
    <name type="ordered locus">ETA_23020</name>
</gene>
<sequence>MNLHEYQAKQLFARYGLPAPTGYACTTPREAEEAASKIGAGPWVVKCQVHAGGRGKAGGVKVVNSKEDIRAFAENWLGKRLVTYQTDASGQPVNQILVEAATDIDKELYLGAVVDRGTRRVVFMASTEGGVEIEKVAEETPHLIHKMALDPLTGPQPYQGRELAFKLGLTGKQVGQFTKIFMGLATLFLERDLALVEINPLVVTKQGDLVCLDGKLTADGNALFRQSDLREMRDPSQEDSREAHAAQWELNYVALEGNIGCMVNGAGLAMGTMDIVKLSGGQPANFLDVGGGATKERVTEAFKIILSDDAVKAVFVNIFGGIVRCDLIADGIIGAVAEVGVNVPVVVRLEGNNAELGARKLADSGLNIIAATSLSDAAQRVVAAAEGK</sequence>
<protein>
    <recommendedName>
        <fullName evidence="1">Succinate--CoA ligase [ADP-forming] subunit beta</fullName>
        <ecNumber evidence="1">6.2.1.5</ecNumber>
    </recommendedName>
    <alternativeName>
        <fullName evidence="1">Succinyl-CoA synthetase subunit beta</fullName>
        <shortName evidence="1">SCS-beta</shortName>
    </alternativeName>
</protein>
<feature type="chain" id="PRO_1000129189" description="Succinate--CoA ligase [ADP-forming] subunit beta">
    <location>
        <begin position="1"/>
        <end position="388"/>
    </location>
</feature>
<feature type="domain" description="ATP-grasp" evidence="1">
    <location>
        <begin position="9"/>
        <end position="244"/>
    </location>
</feature>
<feature type="binding site" evidence="1">
    <location>
        <position position="46"/>
    </location>
    <ligand>
        <name>ATP</name>
        <dbReference type="ChEBI" id="CHEBI:30616"/>
    </ligand>
</feature>
<feature type="binding site" evidence="1">
    <location>
        <begin position="53"/>
        <end position="55"/>
    </location>
    <ligand>
        <name>ATP</name>
        <dbReference type="ChEBI" id="CHEBI:30616"/>
    </ligand>
</feature>
<feature type="binding site" evidence="1">
    <location>
        <position position="99"/>
    </location>
    <ligand>
        <name>ATP</name>
        <dbReference type="ChEBI" id="CHEBI:30616"/>
    </ligand>
</feature>
<feature type="binding site" evidence="1">
    <location>
        <position position="102"/>
    </location>
    <ligand>
        <name>ATP</name>
        <dbReference type="ChEBI" id="CHEBI:30616"/>
    </ligand>
</feature>
<feature type="binding site" evidence="1">
    <location>
        <position position="107"/>
    </location>
    <ligand>
        <name>ATP</name>
        <dbReference type="ChEBI" id="CHEBI:30616"/>
    </ligand>
</feature>
<feature type="binding site" evidence="1">
    <location>
        <position position="199"/>
    </location>
    <ligand>
        <name>Mg(2+)</name>
        <dbReference type="ChEBI" id="CHEBI:18420"/>
    </ligand>
</feature>
<feature type="binding site" evidence="1">
    <location>
        <position position="213"/>
    </location>
    <ligand>
        <name>Mg(2+)</name>
        <dbReference type="ChEBI" id="CHEBI:18420"/>
    </ligand>
</feature>
<feature type="binding site" evidence="1">
    <location>
        <position position="264"/>
    </location>
    <ligand>
        <name>substrate</name>
        <note>ligand shared with subunit alpha</note>
    </ligand>
</feature>
<feature type="binding site" evidence="1">
    <location>
        <begin position="321"/>
        <end position="323"/>
    </location>
    <ligand>
        <name>substrate</name>
        <note>ligand shared with subunit alpha</note>
    </ligand>
</feature>
<keyword id="KW-0067">ATP-binding</keyword>
<keyword id="KW-0436">Ligase</keyword>
<keyword id="KW-0460">Magnesium</keyword>
<keyword id="KW-0479">Metal-binding</keyword>
<keyword id="KW-0547">Nucleotide-binding</keyword>
<keyword id="KW-1185">Reference proteome</keyword>
<keyword id="KW-0816">Tricarboxylic acid cycle</keyword>
<evidence type="ECO:0000255" key="1">
    <source>
        <dbReference type="HAMAP-Rule" id="MF_00558"/>
    </source>
</evidence>